<evidence type="ECO:0000255" key="1">
    <source>
        <dbReference type="HAMAP-Rule" id="MF_00255"/>
    </source>
</evidence>
<keyword id="KW-0030">Aminoacyl-tRNA synthetase</keyword>
<keyword id="KW-0067">ATP-binding</keyword>
<keyword id="KW-0963">Cytoplasm</keyword>
<keyword id="KW-0436">Ligase</keyword>
<keyword id="KW-0547">Nucleotide-binding</keyword>
<keyword id="KW-0648">Protein biosynthesis</keyword>
<keyword id="KW-1185">Reference proteome</keyword>
<dbReference type="EC" id="6.1.1.14" evidence="1"/>
<dbReference type="EMBL" id="AE017180">
    <property type="protein sequence ID" value="AAR33910.1"/>
    <property type="molecule type" value="Genomic_DNA"/>
</dbReference>
<dbReference type="RefSeq" id="NP_951637.1">
    <property type="nucleotide sequence ID" value="NC_002939.5"/>
</dbReference>
<dbReference type="RefSeq" id="WP_010941242.1">
    <property type="nucleotide sequence ID" value="NC_002939.5"/>
</dbReference>
<dbReference type="SMR" id="Q74FM7"/>
<dbReference type="FunCoup" id="Q74FM7">
    <property type="interactions" value="544"/>
</dbReference>
<dbReference type="STRING" id="243231.GSU0579"/>
<dbReference type="EnsemblBacteria" id="AAR33910">
    <property type="protein sequence ID" value="AAR33910"/>
    <property type="gene ID" value="GSU0579"/>
</dbReference>
<dbReference type="KEGG" id="gsu:GSU0579"/>
<dbReference type="PATRIC" id="fig|243231.5.peg.577"/>
<dbReference type="eggNOG" id="COG0751">
    <property type="taxonomic scope" value="Bacteria"/>
</dbReference>
<dbReference type="HOGENOM" id="CLU_007220_2_2_7"/>
<dbReference type="InParanoid" id="Q74FM7"/>
<dbReference type="OrthoDB" id="9775440at2"/>
<dbReference type="Proteomes" id="UP000000577">
    <property type="component" value="Chromosome"/>
</dbReference>
<dbReference type="GO" id="GO:0005829">
    <property type="term" value="C:cytosol"/>
    <property type="evidence" value="ECO:0000318"/>
    <property type="project" value="GO_Central"/>
</dbReference>
<dbReference type="GO" id="GO:0004814">
    <property type="term" value="F:arginine-tRNA ligase activity"/>
    <property type="evidence" value="ECO:0007669"/>
    <property type="project" value="InterPro"/>
</dbReference>
<dbReference type="GO" id="GO:0005524">
    <property type="term" value="F:ATP binding"/>
    <property type="evidence" value="ECO:0007669"/>
    <property type="project" value="UniProtKB-UniRule"/>
</dbReference>
<dbReference type="GO" id="GO:0004820">
    <property type="term" value="F:glycine-tRNA ligase activity"/>
    <property type="evidence" value="ECO:0007669"/>
    <property type="project" value="UniProtKB-UniRule"/>
</dbReference>
<dbReference type="GO" id="GO:0006420">
    <property type="term" value="P:arginyl-tRNA aminoacylation"/>
    <property type="evidence" value="ECO:0007669"/>
    <property type="project" value="InterPro"/>
</dbReference>
<dbReference type="GO" id="GO:0006426">
    <property type="term" value="P:glycyl-tRNA aminoacylation"/>
    <property type="evidence" value="ECO:0007669"/>
    <property type="project" value="UniProtKB-UniRule"/>
</dbReference>
<dbReference type="HAMAP" id="MF_00255">
    <property type="entry name" value="Gly_tRNA_synth_beta"/>
    <property type="match status" value="1"/>
</dbReference>
<dbReference type="InterPro" id="IPR008909">
    <property type="entry name" value="DALR_anticod-bd"/>
</dbReference>
<dbReference type="InterPro" id="IPR015944">
    <property type="entry name" value="Gly-tRNA-synth_bsu"/>
</dbReference>
<dbReference type="InterPro" id="IPR006194">
    <property type="entry name" value="Gly-tRNA-synth_heterodimer"/>
</dbReference>
<dbReference type="NCBIfam" id="TIGR00211">
    <property type="entry name" value="glyS"/>
    <property type="match status" value="1"/>
</dbReference>
<dbReference type="PANTHER" id="PTHR30075:SF2">
    <property type="entry name" value="GLYCINE--TRNA LIGASE, CHLOROPLASTIC_MITOCHONDRIAL 2"/>
    <property type="match status" value="1"/>
</dbReference>
<dbReference type="PANTHER" id="PTHR30075">
    <property type="entry name" value="GLYCYL-TRNA SYNTHETASE"/>
    <property type="match status" value="1"/>
</dbReference>
<dbReference type="Pfam" id="PF05746">
    <property type="entry name" value="DALR_1"/>
    <property type="match status" value="1"/>
</dbReference>
<dbReference type="Pfam" id="PF02092">
    <property type="entry name" value="tRNA_synt_2f"/>
    <property type="match status" value="1"/>
</dbReference>
<dbReference type="PRINTS" id="PR01045">
    <property type="entry name" value="TRNASYNTHGB"/>
</dbReference>
<dbReference type="SUPFAM" id="SSF109604">
    <property type="entry name" value="HD-domain/PDEase-like"/>
    <property type="match status" value="1"/>
</dbReference>
<dbReference type="PROSITE" id="PS50861">
    <property type="entry name" value="AA_TRNA_LIGASE_II_GLYAB"/>
    <property type="match status" value="1"/>
</dbReference>
<sequence>MSKELFLEIGTEEIPAGFLPKAMADMEAIVTKELENARLAFGEVKTFATPRRLALVVKGLPTVQPDAEITALGPARNIAFGPDGTPSKAAEGFARGQGVDVASLTLVSTEKGEYVAAVRKESGRPVPDLLAEILPRLVGGIPFRKSMRWADLDVRFARPIHWIVALFDGVVVPFAFGNVQSGNVSRGHRFMANQPFPVRDFAHYLDECERHFVIPDPERRKETIRREIHRVAKTAGGHLLPDEGLLDEVAYLVEYPSVVHGTFSPDFLKVPREVLITSMRSHQRYFSIVDDAGKLMPGFITINNTLTEDPSVVVKGNERVLRARLSDARFFFEEDQKVKLETRVESLKNVVYQQKLGTSYEKMERFRALAEGLADLLNPAVKAKTSRAAFLCKADLVSGMVGEFPEVQGIMGREYALLQGEDAEVAAAIAEHYLPTQAGGDLPASDIGAFVSIADKLDTICGCFGVGLIPTGSADPYALRRSALGIINIILDRGCRLSLEGEIGKALELLSAKLTRPAAEVMADVLEFFRGRFVNLMADRYPADAVDAAIAAGFDDLVDAEARIGALAAFKGRPDFDSLAVAFKRVCNIVKDGVDQPVDAALFQEPAEGALFAAFQQVRADVEARTASGDYLAALTGIAALKGAVDDFFDKVMVMAEDERVRTNRLALLTGIARLFGGVADFAKIAA</sequence>
<protein>
    <recommendedName>
        <fullName evidence="1">Glycine--tRNA ligase beta subunit</fullName>
        <ecNumber evidence="1">6.1.1.14</ecNumber>
    </recommendedName>
    <alternativeName>
        <fullName evidence="1">Glycyl-tRNA synthetase beta subunit</fullName>
        <shortName evidence="1">GlyRS</shortName>
    </alternativeName>
</protein>
<feature type="chain" id="PRO_1000006362" description="Glycine--tRNA ligase beta subunit">
    <location>
        <begin position="1"/>
        <end position="687"/>
    </location>
</feature>
<proteinExistence type="inferred from homology"/>
<accession>Q74FM7</accession>
<gene>
    <name evidence="1" type="primary">glyS</name>
    <name type="ordered locus">GSU0579</name>
</gene>
<name>SYGB_GEOSL</name>
<reference key="1">
    <citation type="journal article" date="2003" name="Science">
        <title>Genome of Geobacter sulfurreducens: metal reduction in subsurface environments.</title>
        <authorList>
            <person name="Methe B.A."/>
            <person name="Nelson K.E."/>
            <person name="Eisen J.A."/>
            <person name="Paulsen I.T."/>
            <person name="Nelson W.C."/>
            <person name="Heidelberg J.F."/>
            <person name="Wu D."/>
            <person name="Wu M."/>
            <person name="Ward N.L."/>
            <person name="Beanan M.J."/>
            <person name="Dodson R.J."/>
            <person name="Madupu R."/>
            <person name="Brinkac L.M."/>
            <person name="Daugherty S.C."/>
            <person name="DeBoy R.T."/>
            <person name="Durkin A.S."/>
            <person name="Gwinn M.L."/>
            <person name="Kolonay J.F."/>
            <person name="Sullivan S.A."/>
            <person name="Haft D.H."/>
            <person name="Selengut J."/>
            <person name="Davidsen T.M."/>
            <person name="Zafar N."/>
            <person name="White O."/>
            <person name="Tran B."/>
            <person name="Romero C."/>
            <person name="Forberger H.A."/>
            <person name="Weidman J.F."/>
            <person name="Khouri H.M."/>
            <person name="Feldblyum T.V."/>
            <person name="Utterback T.R."/>
            <person name="Van Aken S.E."/>
            <person name="Lovley D.R."/>
            <person name="Fraser C.M."/>
        </authorList>
    </citation>
    <scope>NUCLEOTIDE SEQUENCE [LARGE SCALE GENOMIC DNA]</scope>
    <source>
        <strain>ATCC 51573 / DSM 12127 / PCA</strain>
    </source>
</reference>
<comment type="catalytic activity">
    <reaction evidence="1">
        <text>tRNA(Gly) + glycine + ATP = glycyl-tRNA(Gly) + AMP + diphosphate</text>
        <dbReference type="Rhea" id="RHEA:16013"/>
        <dbReference type="Rhea" id="RHEA-COMP:9664"/>
        <dbReference type="Rhea" id="RHEA-COMP:9683"/>
        <dbReference type="ChEBI" id="CHEBI:30616"/>
        <dbReference type="ChEBI" id="CHEBI:33019"/>
        <dbReference type="ChEBI" id="CHEBI:57305"/>
        <dbReference type="ChEBI" id="CHEBI:78442"/>
        <dbReference type="ChEBI" id="CHEBI:78522"/>
        <dbReference type="ChEBI" id="CHEBI:456215"/>
        <dbReference type="EC" id="6.1.1.14"/>
    </reaction>
</comment>
<comment type="subunit">
    <text evidence="1">Tetramer of two alpha and two beta subunits.</text>
</comment>
<comment type="subcellular location">
    <subcellularLocation>
        <location evidence="1">Cytoplasm</location>
    </subcellularLocation>
</comment>
<comment type="similarity">
    <text evidence="1">Belongs to the class-II aminoacyl-tRNA synthetase family.</text>
</comment>
<organism>
    <name type="scientific">Geobacter sulfurreducens (strain ATCC 51573 / DSM 12127 / PCA)</name>
    <dbReference type="NCBI Taxonomy" id="243231"/>
    <lineage>
        <taxon>Bacteria</taxon>
        <taxon>Pseudomonadati</taxon>
        <taxon>Thermodesulfobacteriota</taxon>
        <taxon>Desulfuromonadia</taxon>
        <taxon>Geobacterales</taxon>
        <taxon>Geobacteraceae</taxon>
        <taxon>Geobacter</taxon>
    </lineage>
</organism>